<keyword id="KW-0963">Cytoplasm</keyword>
<keyword id="KW-0378">Hydrolase</keyword>
<keyword id="KW-1017">Isopeptide bond</keyword>
<keyword id="KW-0479">Metal-binding</keyword>
<keyword id="KW-0539">Nucleus</keyword>
<keyword id="KW-1185">Reference proteome</keyword>
<keyword id="KW-0832">Ubl conjugation</keyword>
<keyword id="KW-0862">Zinc</keyword>
<feature type="chain" id="PRO_0000259566" description="Integrator complex subunit 11">
    <location>
        <begin position="1"/>
        <end position="600"/>
    </location>
</feature>
<feature type="short sequence motif" description="HXHXDH motif">
    <location>
        <begin position="68"/>
        <end position="73"/>
    </location>
</feature>
<feature type="short sequence motif" description="Nuclear localization signal" evidence="1">
    <location>
        <begin position="469"/>
        <end position="479"/>
    </location>
</feature>
<feature type="active site" evidence="1">
    <location>
        <position position="203"/>
    </location>
</feature>
<feature type="binding site" evidence="1">
    <location>
        <position position="68"/>
    </location>
    <ligand>
        <name>Zn(2+)</name>
        <dbReference type="ChEBI" id="CHEBI:29105"/>
        <label>1</label>
    </ligand>
</feature>
<feature type="binding site" evidence="1">
    <location>
        <position position="70"/>
    </location>
    <ligand>
        <name>Zn(2+)</name>
        <dbReference type="ChEBI" id="CHEBI:29105"/>
        <label>1</label>
    </ligand>
</feature>
<feature type="binding site" evidence="1">
    <location>
        <position position="72"/>
    </location>
    <ligand>
        <name>Zn(2+)</name>
        <dbReference type="ChEBI" id="CHEBI:29105"/>
        <label>2</label>
    </ligand>
</feature>
<feature type="binding site" evidence="1">
    <location>
        <position position="73"/>
    </location>
    <ligand>
        <name>Zn(2+)</name>
        <dbReference type="ChEBI" id="CHEBI:29105"/>
        <label>2</label>
    </ligand>
</feature>
<feature type="binding site" evidence="1">
    <location>
        <position position="157"/>
    </location>
    <ligand>
        <name>Zn(2+)</name>
        <dbReference type="ChEBI" id="CHEBI:29105"/>
        <label>1</label>
    </ligand>
</feature>
<feature type="binding site" evidence="1">
    <location>
        <position position="178"/>
    </location>
    <ligand>
        <name>Zn(2+)</name>
        <dbReference type="ChEBI" id="CHEBI:29105"/>
        <label>1</label>
    </ligand>
</feature>
<feature type="binding site" evidence="1">
    <location>
        <position position="178"/>
    </location>
    <ligand>
        <name>Zn(2+)</name>
        <dbReference type="ChEBI" id="CHEBI:29105"/>
        <label>2</label>
    </ligand>
</feature>
<feature type="binding site" evidence="1">
    <location>
        <position position="414"/>
    </location>
    <ligand>
        <name>Zn(2+)</name>
        <dbReference type="ChEBI" id="CHEBI:29105"/>
        <label>2</label>
    </ligand>
</feature>
<feature type="cross-link" description="Glycyl lysine isopeptide (Lys-Gly) (interchain with G-Cter in SUMO)" evidence="1">
    <location>
        <position position="381"/>
    </location>
</feature>
<feature type="cross-link" description="Glycyl lysine isopeptide (Lys-Gly) (interchain with G-Cter in SUMO)" evidence="1">
    <location>
        <position position="462"/>
    </location>
</feature>
<feature type="cross-link" description="Glycyl lysine isopeptide (Lys-Gly) (interchain with G-Cter in SUMO)" evidence="1">
    <location>
        <position position="475"/>
    </location>
</feature>
<proteinExistence type="evidence at transcript level"/>
<reference key="1">
    <citation type="journal article" date="2004" name="Genome Res.">
        <title>The status, quality, and expansion of the NIH full-length cDNA project: the Mammalian Gene Collection (MGC).</title>
        <authorList>
            <consortium name="The MGC Project Team"/>
        </authorList>
    </citation>
    <scope>NUCLEOTIDE SEQUENCE [LARGE SCALE MRNA]</scope>
    <source>
        <tissue>Kidney</tissue>
    </source>
</reference>
<organism>
    <name type="scientific">Rattus norvegicus</name>
    <name type="common">Rat</name>
    <dbReference type="NCBI Taxonomy" id="10116"/>
    <lineage>
        <taxon>Eukaryota</taxon>
        <taxon>Metazoa</taxon>
        <taxon>Chordata</taxon>
        <taxon>Craniata</taxon>
        <taxon>Vertebrata</taxon>
        <taxon>Euteleostomi</taxon>
        <taxon>Mammalia</taxon>
        <taxon>Eutheria</taxon>
        <taxon>Euarchontoglires</taxon>
        <taxon>Glires</taxon>
        <taxon>Rodentia</taxon>
        <taxon>Myomorpha</taxon>
        <taxon>Muroidea</taxon>
        <taxon>Muridae</taxon>
        <taxon>Murinae</taxon>
        <taxon>Rattus</taxon>
    </lineage>
</organism>
<name>INT11_RAT</name>
<dbReference type="EC" id="3.1.27.-"/>
<dbReference type="EMBL" id="BC105303">
    <property type="protein sequence ID" value="AAI05304.1"/>
    <property type="molecule type" value="mRNA"/>
</dbReference>
<dbReference type="RefSeq" id="NP_001029064.2">
    <property type="nucleotide sequence ID" value="NM_001033892.2"/>
</dbReference>
<dbReference type="SMR" id="Q3MHC2"/>
<dbReference type="FunCoup" id="Q3MHC2">
    <property type="interactions" value="2448"/>
</dbReference>
<dbReference type="STRING" id="10116.ENSRNOP00000026725"/>
<dbReference type="PhosphoSitePlus" id="Q3MHC2"/>
<dbReference type="PaxDb" id="10116-ENSRNOP00000026725"/>
<dbReference type="GeneID" id="298688"/>
<dbReference type="KEGG" id="rno:298688"/>
<dbReference type="AGR" id="RGD:1306841"/>
<dbReference type="CTD" id="54973"/>
<dbReference type="RGD" id="1306841">
    <property type="gene designation" value="Ints11"/>
</dbReference>
<dbReference type="VEuPathDB" id="HostDB:ENSRNOG00000019712"/>
<dbReference type="eggNOG" id="KOG1136">
    <property type="taxonomic scope" value="Eukaryota"/>
</dbReference>
<dbReference type="HOGENOM" id="CLU_009673_3_2_1"/>
<dbReference type="InParanoid" id="Q3MHC2"/>
<dbReference type="OMA" id="YLDGMIW"/>
<dbReference type="OrthoDB" id="10249535at2759"/>
<dbReference type="PhylomeDB" id="Q3MHC2"/>
<dbReference type="TreeFam" id="TF105878"/>
<dbReference type="Reactome" id="R-RNO-6807505">
    <property type="pathway name" value="RNA polymerase II transcribes snRNA genes"/>
</dbReference>
<dbReference type="PRO" id="PR:Q3MHC2"/>
<dbReference type="Proteomes" id="UP000002494">
    <property type="component" value="Chromosome 5"/>
</dbReference>
<dbReference type="Bgee" id="ENSRNOG00000019712">
    <property type="expression patterns" value="Expressed in testis and 19 other cell types or tissues"/>
</dbReference>
<dbReference type="GO" id="GO:0005737">
    <property type="term" value="C:cytoplasm"/>
    <property type="evidence" value="ECO:0000250"/>
    <property type="project" value="UniProtKB"/>
</dbReference>
<dbReference type="GO" id="GO:0160232">
    <property type="term" value="C:INTAC complex"/>
    <property type="evidence" value="ECO:0000250"/>
    <property type="project" value="UniProtKB"/>
</dbReference>
<dbReference type="GO" id="GO:0032039">
    <property type="term" value="C:integrator complex"/>
    <property type="evidence" value="ECO:0000250"/>
    <property type="project" value="UniProtKB"/>
</dbReference>
<dbReference type="GO" id="GO:0005634">
    <property type="term" value="C:nucleus"/>
    <property type="evidence" value="ECO:0000250"/>
    <property type="project" value="UniProtKB"/>
</dbReference>
<dbReference type="GO" id="GO:0004521">
    <property type="term" value="F:RNA endonuclease activity"/>
    <property type="evidence" value="ECO:0000250"/>
    <property type="project" value="UniProtKB"/>
</dbReference>
<dbReference type="GO" id="GO:0160240">
    <property type="term" value="P:RNA polymerase II transcription initiation surveillance"/>
    <property type="evidence" value="ECO:0000250"/>
    <property type="project" value="UniProtKB"/>
</dbReference>
<dbReference type="GO" id="GO:0034472">
    <property type="term" value="P:snRNA 3'-end processing"/>
    <property type="evidence" value="ECO:0000250"/>
    <property type="project" value="UniProtKB"/>
</dbReference>
<dbReference type="GO" id="GO:0016180">
    <property type="term" value="P:snRNA processing"/>
    <property type="evidence" value="ECO:0000266"/>
    <property type="project" value="RGD"/>
</dbReference>
<dbReference type="CDD" id="cd16291">
    <property type="entry name" value="INTS11-like_MBL-fold"/>
    <property type="match status" value="1"/>
</dbReference>
<dbReference type="FunFam" id="3.40.50.10890:FF:000002">
    <property type="entry name" value="Integrator complex subunit 11"/>
    <property type="match status" value="1"/>
</dbReference>
<dbReference type="FunFam" id="3.60.15.10:FF:000003">
    <property type="entry name" value="Integrator complex subunit 11"/>
    <property type="match status" value="1"/>
</dbReference>
<dbReference type="Gene3D" id="3.40.50.10890">
    <property type="match status" value="1"/>
</dbReference>
<dbReference type="Gene3D" id="3.60.15.10">
    <property type="entry name" value="Ribonuclease Z/Hydroxyacylglutathione hydrolase-like"/>
    <property type="match status" value="1"/>
</dbReference>
<dbReference type="InterPro" id="IPR022712">
    <property type="entry name" value="Beta_Casp"/>
</dbReference>
<dbReference type="InterPro" id="IPR041897">
    <property type="entry name" value="INTS11-like_MBL-fold"/>
</dbReference>
<dbReference type="InterPro" id="IPR048662">
    <property type="entry name" value="IntS11_C"/>
</dbReference>
<dbReference type="InterPro" id="IPR050698">
    <property type="entry name" value="MBL"/>
</dbReference>
<dbReference type="InterPro" id="IPR001279">
    <property type="entry name" value="Metallo-B-lactamas"/>
</dbReference>
<dbReference type="InterPro" id="IPR036866">
    <property type="entry name" value="RibonucZ/Hydroxyglut_hydro"/>
</dbReference>
<dbReference type="InterPro" id="IPR011108">
    <property type="entry name" value="RMMBL"/>
</dbReference>
<dbReference type="PANTHER" id="PTHR11203">
    <property type="entry name" value="CLEAVAGE AND POLYADENYLATION SPECIFICITY FACTOR FAMILY MEMBER"/>
    <property type="match status" value="1"/>
</dbReference>
<dbReference type="PANTHER" id="PTHR11203:SF37">
    <property type="entry name" value="INTEGRATOR COMPLEX SUBUNIT 11"/>
    <property type="match status" value="1"/>
</dbReference>
<dbReference type="Pfam" id="PF10996">
    <property type="entry name" value="Beta-Casp"/>
    <property type="match status" value="1"/>
</dbReference>
<dbReference type="Pfam" id="PF21386">
    <property type="entry name" value="IntS11_C"/>
    <property type="match status" value="1"/>
</dbReference>
<dbReference type="Pfam" id="PF16661">
    <property type="entry name" value="Lactamase_B_6"/>
    <property type="match status" value="1"/>
</dbReference>
<dbReference type="Pfam" id="PF07521">
    <property type="entry name" value="RMMBL"/>
    <property type="match status" value="1"/>
</dbReference>
<dbReference type="SMART" id="SM01027">
    <property type="entry name" value="Beta-Casp"/>
    <property type="match status" value="1"/>
</dbReference>
<dbReference type="SMART" id="SM00849">
    <property type="entry name" value="Lactamase_B"/>
    <property type="match status" value="1"/>
</dbReference>
<dbReference type="SUPFAM" id="SSF56281">
    <property type="entry name" value="Metallo-hydrolase/oxidoreductase"/>
    <property type="match status" value="1"/>
</dbReference>
<comment type="function">
    <text evidence="1">RNA endonuclease component of the integrator complex, a multiprotein complex that terminates RNA polymerase II (Pol II) transcription in the promoter-proximal region of genes. The integrator complex provides a quality checkpoint during transcription elongation by driving premature transcription termination of transcripts that are unfavorably configured for transcriptional elongation: the complex terminates transcription by (1) catalyzing dephosphorylation of the C-terminal domain (CTD) of Pol II subunit POLR2A/RPB1 and SUPT5H/SPT5, (2) degrading the exiting nascent RNA transcript via endonuclease activity and (3) promoting the release of Pol II from bound DNA. The integrator complex is also involved in terminating the synthesis of non-coding Pol II transcripts, such as enhancer RNAs (eRNAs), small nuclear RNAs (snRNAs), telomerase RNAs and long non-coding RNAs (lncRNAs). Within the integrator complex, INTS11 constitutes the RNA endonuclease subunit that degrades exiting nascent RNA transcripts. Mediates recruitment of cytoplasmic dynein to the nuclear envelope, probably as component of the integrator complex.</text>
</comment>
<comment type="cofactor">
    <cofactor evidence="1">
        <name>Zn(2+)</name>
        <dbReference type="ChEBI" id="CHEBI:29105"/>
    </cofactor>
</comment>
<comment type="activity regulation">
    <text evidence="1">The RNA endonuclease activity is inhibited by BRAT1 that forms hyrogen bond and hydrophobic interactions with the active site.</text>
</comment>
<comment type="subunit">
    <text evidence="1">Component of the Integrator complex, composed of core subunits INTS1, INTS2, INTS3, INTS4, INTS5, INTS6, INTS7, INTS8, INTS9/RC74, INTS10, INTS11/CPSF3L, INTS12, INTS13, INTS14 and INTS15. The core complex associates with protein phosphatase 2A subunits PPP2CA and PPP2R1A, to form the Integrator-PP2A (INTAC) complex. INTS11 is part of the RNA endonuclease subcomplex, composed of INTS4, INTS9, INTS11 and inositol hexakisphosphate (InsP6). Interacts with WDR73; interaction is required for the assembly of the RNA endonuclease subcomplex in the cytoplasm. Interacts with BRAT1; interaction is required for the assembly of the RNA endonuclease subcomplex and inhibits the endonuclease activity of INTS11 before formation of mature integrator complex.</text>
</comment>
<comment type="subcellular location">
    <subcellularLocation>
        <location evidence="1">Nucleus</location>
    </subcellularLocation>
    <subcellularLocation>
        <location evidence="1">Cytoplasm</location>
    </subcellularLocation>
</comment>
<comment type="PTM">
    <text evidence="1">Sumoylated; sumoylation regulates its subcellular location and is required for integrator complex integrity.</text>
</comment>
<comment type="similarity">
    <text evidence="2">Belongs to the metallo-beta-lactamase superfamily. RNA-metabolizing metallo-beta-lactamase-like family. INTS11 subfamily.</text>
</comment>
<protein>
    <recommendedName>
        <fullName>Integrator complex subunit 11</fullName>
        <shortName>Int11</shortName>
        <ecNumber>3.1.27.-</ecNumber>
    </recommendedName>
    <alternativeName>
        <fullName>Cleavage and polyadenylation-specific factor 3-like protein</fullName>
        <shortName>CPSF3-like protein</shortName>
    </alternativeName>
</protein>
<sequence>MPEIRVTPLGAGQDVGRSCILVSISGKNVMLDCGMHMGYNDDRRFPDFSYITQSGRLTDFLDCVIISHFHLDHCGALPYFSEMVGYDGPIYMTHPTQAICPILLEDYRKIAVDKKGEANFFTSQMIKDCMKKVVAVHLHQTVQVDDELEIKAYYAGHVLGAAMFQIKVGSESVVYTGDYNMTPDRHLGAAWIDKCRPNLLITESTYATTIRDSKRCRERDFLKKVHETVERGGKVLIPVFALGRAQELCILLETFWERMNLKVPIYFSTGLTEKANHYYKLFITWTNQKIRKTFVQRNMFEFKHIKAFDRTFADNPGPMVVFATPGMLHAGQSLQIFRKWAGNEKNMVIMPGYCVQGTVGHKILSGQRKLEMEGRQMLEVKMQVEYMSFSAHADAKGIMQLVGQAEPESVLLVHGEAKKMEFLRQKIEQEFRVSCYMPANGETVTLPTSPSIPVGISLGLLKREMVQGLLPEAKKPRLLHGTLIMKDNNFRLVSSEQALKELGLAEHQLRFTCRVHLQDTRKEQETALRVYSHLKSTLKDHCVQHLPDGSVTVESILIQAAAHSEDPGTKVLLVSWTYQDEELGSFLTALLKNGLPQAPS</sequence>
<evidence type="ECO:0000250" key="1">
    <source>
        <dbReference type="UniProtKB" id="Q5TA45"/>
    </source>
</evidence>
<evidence type="ECO:0000305" key="2"/>
<accession>Q3MHC2</accession>
<gene>
    <name type="primary">Ints11</name>
    <name type="synonym">Cpsf3l</name>
</gene>